<dbReference type="EC" id="3.1.-.-"/>
<dbReference type="EMBL" id="J03399">
    <property type="protein sequence ID" value="AAB59815.1"/>
    <property type="molecule type" value="Genomic_DNA"/>
</dbReference>
<dbReference type="EMBL" id="AY243312">
    <property type="protein sequence ID" value="AAO89361.1"/>
    <property type="molecule type" value="Genomic_DNA"/>
</dbReference>
<dbReference type="RefSeq" id="YP_232964.1">
    <property type="nucleotide sequence ID" value="NC_006998.1"/>
</dbReference>
<dbReference type="DNASU" id="3707538"/>
<dbReference type="GeneID" id="3707538"/>
<dbReference type="KEGG" id="vg:3707538"/>
<dbReference type="Proteomes" id="UP000000344">
    <property type="component" value="Genome"/>
</dbReference>
<dbReference type="GO" id="GO:0044423">
    <property type="term" value="C:virion component"/>
    <property type="evidence" value="ECO:0007669"/>
    <property type="project" value="UniProtKB-KW"/>
</dbReference>
<dbReference type="GO" id="GO:0046872">
    <property type="term" value="F:metal ion binding"/>
    <property type="evidence" value="ECO:0007669"/>
    <property type="project" value="UniProtKB-KW"/>
</dbReference>
<dbReference type="GO" id="GO:0004518">
    <property type="term" value="F:nuclease activity"/>
    <property type="evidence" value="ECO:0007669"/>
    <property type="project" value="UniProtKB-KW"/>
</dbReference>
<dbReference type="GO" id="GO:0006281">
    <property type="term" value="P:DNA repair"/>
    <property type="evidence" value="ECO:0007669"/>
    <property type="project" value="UniProtKB-KW"/>
</dbReference>
<dbReference type="CDD" id="cd18674">
    <property type="entry name" value="PIN_Pox_G5"/>
    <property type="match status" value="1"/>
</dbReference>
<dbReference type="InterPro" id="IPR007678">
    <property type="entry name" value="Poxvirus_G5"/>
</dbReference>
<dbReference type="Pfam" id="PF04599">
    <property type="entry name" value="Pox_G5"/>
    <property type="match status" value="1"/>
</dbReference>
<comment type="function">
    <text evidence="2 3">Putative nuclease that seems to be required for double-strand break repair, homologous recombination, and production of full-length viral genomic DNA.</text>
</comment>
<comment type="cofactor">
    <cofactor evidence="1">
        <name>Mg(2+)</name>
        <dbReference type="ChEBI" id="CHEBI:18420"/>
    </cofactor>
    <text evidence="1">Binds 2 magnesium ions per subunit. They probably participate in the reaction catalyzed by the enzyme.</text>
</comment>
<comment type="subcellular location">
    <subcellularLocation>
        <location evidence="2">Virion</location>
    </subcellularLocation>
    <text>Present in the virion core.</text>
</comment>
<comment type="induction">
    <text evidence="2 4">Expressed in the early phase of the viral replicative cycle.</text>
</comment>
<comment type="disruption phenotype">
    <text evidence="3">When G5 is deleted, most of the DNA made in infected cells is not packaged in virus particles.</text>
</comment>
<comment type="similarity">
    <text evidence="5">Belongs to the XPG/RAD2 endonuclease family. FEN1 subfamily.</text>
</comment>
<feature type="chain" id="PRO_0000412281" description="Putative nuclease OPG089">
    <location>
        <begin position="1"/>
        <end position="434"/>
    </location>
</feature>
<feature type="binding site" evidence="1">
    <location>
        <position position="33"/>
    </location>
    <ligand>
        <name>Mg(2+)</name>
        <dbReference type="ChEBI" id="CHEBI:18420"/>
        <label>1</label>
    </ligand>
</feature>
<feature type="binding site" evidence="1">
    <location>
        <position position="74"/>
    </location>
    <ligand>
        <name>Mg(2+)</name>
        <dbReference type="ChEBI" id="CHEBI:18420"/>
        <label>1</label>
    </ligand>
</feature>
<feature type="binding site" evidence="1">
    <location>
        <position position="168"/>
    </location>
    <ligand>
        <name>Mg(2+)</name>
        <dbReference type="ChEBI" id="CHEBI:18420"/>
        <label>1</label>
    </ligand>
</feature>
<feature type="binding site" evidence="1">
    <location>
        <position position="170"/>
    </location>
    <ligand>
        <name>Mg(2+)</name>
        <dbReference type="ChEBI" id="CHEBI:18420"/>
        <label>1</label>
    </ligand>
</feature>
<feature type="binding site" evidence="1">
    <location>
        <position position="196"/>
    </location>
    <ligand>
        <name>Mg(2+)</name>
        <dbReference type="ChEBI" id="CHEBI:18420"/>
        <label>2</label>
    </ligand>
</feature>
<feature type="binding site" evidence="1">
    <location>
        <position position="198"/>
    </location>
    <ligand>
        <name>Mg(2+)</name>
        <dbReference type="ChEBI" id="CHEBI:18420"/>
        <label>2</label>
    </ligand>
</feature>
<feature type="mutagenesis site" description="Complete loss of function." evidence="3">
    <original>D</original>
    <variation>A</variation>
    <location>
        <position position="33"/>
    </location>
</feature>
<feature type="mutagenesis site" description="Complete loss of function." evidence="3">
    <original>D</original>
    <variation>A</variation>
    <location>
        <position position="198"/>
    </location>
</feature>
<evidence type="ECO:0000250" key="1"/>
<evidence type="ECO:0000269" key="2">
    <source>
    </source>
</evidence>
<evidence type="ECO:0000269" key="3">
    <source>
    </source>
</evidence>
<evidence type="ECO:0000269" key="4">
    <source>
    </source>
</evidence>
<evidence type="ECO:0000305" key="5"/>
<reference key="1">
    <citation type="journal article" date="1991" name="Virology">
        <title>Genetic and molecular biological characterization of a vaccinia virus gene which renders the virus dependent on isatin-beta-thiosemicarbazone (IBT).</title>
        <authorList>
            <person name="Meis R.J."/>
            <person name="Condit R.C."/>
        </authorList>
    </citation>
    <scope>NUCLEOTIDE SEQUENCE [GENOMIC DNA]</scope>
</reference>
<reference key="2">
    <citation type="submission" date="2003-02" db="EMBL/GenBank/DDBJ databases">
        <title>Sequencing of the coding region of Vaccinia-WR to an average 9-fold redundancy and an error rate of 0.16/10kb.</title>
        <authorList>
            <person name="Esposito J.J."/>
            <person name="Frace A.M."/>
            <person name="Sammons S.A."/>
            <person name="Olsen-Rasmussen M."/>
            <person name="Osborne J."/>
            <person name="Wohlhueter R."/>
        </authorList>
    </citation>
    <scope>NUCLEOTIDE SEQUENCE [GENOMIC DNA]</scope>
</reference>
<reference key="3">
    <citation type="journal article" date="2004" name="J. Virol.">
        <title>Vaccinia virus mutants with alanine substitutions in the conserved G5R gene fail to initiate morphogenesis at the nonpermissive temperature.</title>
        <authorList>
            <person name="da Fonseca F.G."/>
            <person name="Weisberg A.S."/>
            <person name="Caeiro M.F."/>
            <person name="Moss B."/>
        </authorList>
    </citation>
    <scope>FUNCTION</scope>
    <scope>INDUCTION</scope>
    <scope>SUBCELLULAR LOCATION</scope>
</reference>
<reference key="4">
    <citation type="journal article" date="2006" name="Bioinformatics">
        <title>Predicted function of the vaccinia virus G5R protein.</title>
        <authorList>
            <person name="Da Silva M."/>
            <person name="Shen L."/>
            <person name="Tcherepanov V."/>
            <person name="Watson C."/>
            <person name="Upton C."/>
        </authorList>
    </citation>
    <scope>SIMILARITY</scope>
</reference>
<reference key="5">
    <citation type="journal article" date="2009" name="Proc. Natl. Acad. Sci. U.S.A.">
        <title>Predicted poxvirus FEN1-like nuclease required for homologous recombination, double-strand break repair and full-size genome formation.</title>
        <authorList>
            <person name="Senkevich T.G."/>
            <person name="Koonin E.V."/>
            <person name="Moss B."/>
        </authorList>
    </citation>
    <scope>FUNCTION</scope>
    <scope>DISRUPTION PHENOTYPE</scope>
    <scope>MUTAGENESIS OF ASP-33 AND ASP-198</scope>
</reference>
<reference key="6">
    <citation type="journal article" date="2015" name="J. Virol.">
        <title>Deciphering poxvirus gene expression by RNA sequencing and ribosome profiling.</title>
        <authorList>
            <person name="Yang Z."/>
            <person name="Cao S."/>
            <person name="Martens C.A."/>
            <person name="Porcella S.F."/>
            <person name="Xie Z."/>
            <person name="Ma M."/>
            <person name="Shen B."/>
            <person name="Moss B."/>
        </authorList>
    </citation>
    <scope>INDUCTION</scope>
</reference>
<proteinExistence type="evidence at protein level"/>
<accession>Q80HX0</accession>
<accession>Q85325</accession>
<keyword id="KW-0227">DNA damage</keyword>
<keyword id="KW-0234">DNA repair</keyword>
<keyword id="KW-0244">Early protein</keyword>
<keyword id="KW-0378">Hydrolase</keyword>
<keyword id="KW-0460">Magnesium</keyword>
<keyword id="KW-0479">Metal-binding</keyword>
<keyword id="KW-0540">Nuclease</keyword>
<keyword id="KW-1185">Reference proteome</keyword>
<keyword id="KW-0946">Virion</keyword>
<organism>
    <name type="scientific">Vaccinia virus (strain Western Reserve)</name>
    <name type="common">VACV</name>
    <name type="synonym">Vaccinia virus (strain WR)</name>
    <dbReference type="NCBI Taxonomy" id="10254"/>
    <lineage>
        <taxon>Viruses</taxon>
        <taxon>Varidnaviria</taxon>
        <taxon>Bamfordvirae</taxon>
        <taxon>Nucleocytoviricota</taxon>
        <taxon>Pokkesviricetes</taxon>
        <taxon>Chitovirales</taxon>
        <taxon>Poxviridae</taxon>
        <taxon>Chordopoxvirinae</taxon>
        <taxon>Orthopoxvirus</taxon>
        <taxon>Vaccinia virus</taxon>
    </lineage>
</organism>
<name>PG089_VACCW</name>
<organismHost>
    <name type="scientific">Bos taurus</name>
    <name type="common">Bovine</name>
    <dbReference type="NCBI Taxonomy" id="9913"/>
</organismHost>
<gene>
    <name type="primary">OPG089</name>
    <name type="ordered locus">VACWR082</name>
    <name type="ORF">G5R</name>
</gene>
<sequence length="434" mass="49847">MGIKNLKSLLLENKSLTILDDNLYKVYNGIFVDTMSIYIAVANCVRNLEELTTVFIKYVNGWVKKGGHVTLFIDRGSIKIKQDVRDKRRKYSKLTKDRKMLELEKCTSEIQNVTGFMEEEIKAEMQLKIDKLTFQIYLSDSDNIKISLNEILTHFNNNENVTLFYCDERDAEFVMCLEAKTHFSTTGEWPLIISTDQDTMLFASADNHPKMIKNLTQLFKYVPSAEDNYLAKLTALVNGCDFFPGLYGASITPNNLNKIQLFSDFTIDNIVTSLAIKNYYRKTNSTVDVRNIVTFINDYANLDDVYSYIPPCQCTVQEFIFSALDEKWNEFKSSYLESVPLPCQLMYALEPRKEIDVSEVKTLSSYIDFENTKSDIDVIKSISSIFGYSNENCNTIVFGIYKDNLLLSINSSFYFNDSLLITNTKSDNIINIGY</sequence>
<protein>
    <recommendedName>
        <fullName>Putative nuclease OPG089</fullName>
        <ecNumber>3.1.-.-</ecNumber>
    </recommendedName>
    <alternativeName>
        <fullName>Putative nuclease G5</fullName>
    </alternativeName>
</protein>